<sequence>MSKMAVLFLAVFLMNSVLMIYCDPDHYIRAGYNHKYPFRICSIAKGTDLMRFDRDISCSPYKSNAKMSEGFFIIYKTNIETYTFPVRTYKKELTFQSSYRDVGVVYFLDRTVMGLAMPVYEANLVNSHAQCYSAVAMKRPDGTVFSAFHEDNNKNNTLNLFPLNFKSITNKRFITTKEPYFARGPLWLYSTSTSLNCIVTEATAKAKYPFSYFALTTGEIVEGSPFFNGSNGKHFAEPLEKLTILENYTMIEDLMNGMNGATTLVRKIAFLEKADTLFSWEIKEENESVCMLKHWTTVTHGLRAETNETYHFISKELTAAFVAPKESLNLTDPKQTCIKNEFEKIINEVYMSDYNDTYSMNGSYQIFKTTGDLILIWQPLVQKSLMFLEQGSEKIRRRRDVGDVKSRHDILYVQLQYLYDTLKDYINDALGNLAESWCLDQKRTITMLHELSKISPSSIVSEVYGRPISAQLHGDVLAISKCIEVNQSSVQLHKSMRVVDAKGVRSETMCYNRPLVTFSFVNSTPEVVPGQLGLDNEILLGDHRTEECEIPSTKIFLSGNHAHVYTDYTHTNSTPIEDIEVLDAFIRLKIDPLENADFKVLDLYSPDELSRANVFDLENILREYNSYKSALYTIEAKIATNTPSYVNGINSFLQGLGAIGTGLGSVISVTAGALGDIVGGVVSFLKNPFGGGLMLILAIVVVVIIIVVFVRQRHVLSKPIDMMFPYATNPVTTVSSVTGTTVVKTPSVKDVDGGTSVAVSEKEEGMADVSGQVSDDEYSQEDALKMLKAIKSLDESYRRKPSSSESHASKPSLIDRIRYRGYKSVNVEEA</sequence>
<feature type="signal peptide" evidence="3">
    <location>
        <begin position="1"/>
        <end position="22"/>
    </location>
</feature>
<feature type="chain" id="PRO_0000038186" description="Envelope glycoprotein B" evidence="3">
    <location>
        <begin position="23"/>
        <end position="830"/>
    </location>
</feature>
<feature type="topological domain" description="Virion surface" evidence="3">
    <location>
        <begin position="23"/>
        <end position="688"/>
    </location>
</feature>
<feature type="transmembrane region" description="Helical" evidence="3">
    <location>
        <begin position="689"/>
        <end position="709"/>
    </location>
</feature>
<feature type="topological domain" description="Intravirion" evidence="3">
    <location>
        <begin position="710"/>
        <end position="830"/>
    </location>
</feature>
<feature type="region of interest" description="Involved in fusion and/or binding to host membrane" evidence="3">
    <location>
        <begin position="98"/>
        <end position="104"/>
    </location>
</feature>
<feature type="region of interest" description="Involved in fusion and/or binding to host membrane" evidence="3">
    <location>
        <begin position="184"/>
        <end position="191"/>
    </location>
</feature>
<feature type="region of interest" description="Hydrophobic membrane proximal region" evidence="3">
    <location>
        <begin position="634"/>
        <end position="686"/>
    </location>
</feature>
<feature type="region of interest" description="Hydrophobic membrane proximal region">
    <location>
        <begin position="644"/>
        <end position="685"/>
    </location>
</feature>
<feature type="short sequence motif" description="Internalization motif" evidence="3">
    <location>
        <begin position="822"/>
        <end position="825"/>
    </location>
</feature>
<feature type="site" description="Cleavage; by host furin" evidence="2">
    <location>
        <begin position="399"/>
        <end position="400"/>
    </location>
</feature>
<feature type="glycosylation site" description="N-linked (GlcNAc...) asparagine; by host" evidence="3">
    <location>
        <position position="155"/>
    </location>
</feature>
<feature type="glycosylation site" description="N-linked (GlcNAc...) asparagine; by host" evidence="3">
    <location>
        <position position="228"/>
    </location>
</feature>
<feature type="glycosylation site" description="N-linked (GlcNAc...) asparagine; by host" evidence="3">
    <location>
        <position position="247"/>
    </location>
</feature>
<feature type="glycosylation site" description="N-linked (GlcNAc...) asparagine; by host" evidence="3">
    <location>
        <position position="286"/>
    </location>
</feature>
<feature type="glycosylation site" description="N-linked (GlcNAc...) asparagine; by host" evidence="3">
    <location>
        <position position="307"/>
    </location>
</feature>
<feature type="glycosylation site" description="N-linked (GlcNAc...) asparagine; by host" evidence="3">
    <location>
        <position position="329"/>
    </location>
</feature>
<feature type="glycosylation site" description="N-linked (GlcNAc...) asparagine; by host" evidence="3">
    <location>
        <position position="355"/>
    </location>
</feature>
<feature type="glycosylation site" description="N-linked (GlcNAc...) asparagine; by host" evidence="3">
    <location>
        <position position="361"/>
    </location>
</feature>
<feature type="glycosylation site" description="N-linked (GlcNAc...) asparagine; by host" evidence="3">
    <location>
        <position position="486"/>
    </location>
</feature>
<feature type="disulfide bond" evidence="3">
    <location>
        <begin position="41"/>
        <end position="482"/>
    </location>
</feature>
<feature type="disulfide bond" evidence="3">
    <location>
        <begin position="58"/>
        <end position="438"/>
    </location>
</feature>
<feature type="disulfide bond" evidence="3">
    <location>
        <begin position="131"/>
        <end position="197"/>
    </location>
</feature>
<feature type="disulfide bond" evidence="3">
    <location>
        <begin position="290"/>
        <end position="337"/>
    </location>
</feature>
<feature type="disulfide bond" evidence="3">
    <location>
        <begin position="510"/>
        <end position="548"/>
    </location>
</feature>
<name>GB_HHV6U</name>
<comment type="function">
    <text evidence="3">Envelope glycoprotein that forms spikes at the surface of virion envelope. Essential for the initial attachment to heparan sulfate moieties of the host cell surface proteoglycans. Involved in fusion of viral and cellular membranes leading to virus entry into the host cell. Following initial binding to its host receptors, membrane fusion is mediated by the fusion machinery composed at least of gB and the heterodimer gH/gL. May be involved in the fusion between the virion envelope and the outer nuclear membrane during virion egress.</text>
</comment>
<comment type="subunit">
    <text evidence="3">Homotrimer; disulfide-linked. Binds to heparan sulfate proteoglycans. Interacts with gH/gL heterodimer.</text>
</comment>
<comment type="subcellular location">
    <subcellularLocation>
        <location evidence="3">Virion membrane</location>
        <topology evidence="3">Single-pass type I membrane protein</topology>
    </subcellularLocation>
    <subcellularLocation>
        <location evidence="3">Host cell membrane</location>
        <topology evidence="3">Single-pass type I membrane protein</topology>
    </subcellularLocation>
    <subcellularLocation>
        <location evidence="3">Host endosome membrane</location>
        <topology evidence="3">Single-pass type I membrane protein</topology>
    </subcellularLocation>
    <subcellularLocation>
        <location evidence="3">Host Golgi apparatus membrane</location>
        <topology evidence="3">Single-pass type I membrane protein</topology>
    </subcellularLocation>
    <text evidence="3">During virion morphogenesis, this protein probably accumulates in the endosomes and trans-Golgi where secondary envelopment occurs. It is probably transported to the cell surface from where it is endocytosed and directed to the trans-Golgi network (TGN).</text>
</comment>
<comment type="PTM">
    <text evidence="1">A proteolytic cleavage by host furin generates two subunits that remain linked by disulfide bonds.</text>
</comment>
<comment type="similarity">
    <text evidence="3">Belongs to the herpesviridae glycoprotein B family.</text>
</comment>
<proteinExistence type="inferred from homology"/>
<reference key="1">
    <citation type="journal article" date="1995" name="Virology">
        <title>The DNA sequence of human herpesvirus-6: structure, coding content, and genome evolution.</title>
        <authorList>
            <person name="Gompels U.A."/>
            <person name="Nicholas J."/>
            <person name="Lawrence G.L."/>
            <person name="Jones M."/>
            <person name="Thomson B.J."/>
            <person name="Martin M.E.D."/>
            <person name="Efstathiou S."/>
            <person name="Craxton M.A."/>
            <person name="Macaulay H.A."/>
        </authorList>
    </citation>
    <scope>NUCLEOTIDE SEQUENCE [LARGE SCALE GENOMIC DNA]</scope>
</reference>
<reference key="2">
    <citation type="journal article" date="1993" name="Virology">
        <title>Identification and analysis of the transport/capsid assembly protein (tp/cap) gene of human herpesvirus-6 (HHV6).</title>
        <authorList>
            <person name="Jones M.D."/>
            <person name="Teo I.A."/>
        </authorList>
    </citation>
    <scope>NUCLEOTIDE SEQUENCE [GENOMIC DNA] OF 1-573</scope>
</reference>
<reference key="3">
    <citation type="journal article" date="1991" name="J. Virol.">
        <title>Characterization of the DNA polymerase gene of human herpesvirus 6.</title>
        <authorList>
            <person name="Teo I.A."/>
            <person name="Griffin B.E."/>
            <person name="Jones M.D."/>
        </authorList>
    </citation>
    <scope>NUCLEOTIDE SEQUENCE [GENOMIC DNA] OF 522-830</scope>
</reference>
<gene>
    <name evidence="3" type="primary">gB</name>
    <name type="ORF">U39</name>
</gene>
<dbReference type="EMBL" id="X83413">
    <property type="protein sequence ID" value="CAA58373.1"/>
    <property type="molecule type" value="Genomic_DNA"/>
</dbReference>
<dbReference type="EMBL" id="L20954">
    <property type="protein sequence ID" value="AAA03554.1"/>
    <property type="molecule type" value="Genomic_DNA"/>
</dbReference>
<dbReference type="EMBL" id="M63804">
    <property type="protein sequence ID" value="AAA74632.1"/>
    <property type="molecule type" value="Genomic_DNA"/>
</dbReference>
<dbReference type="PIR" id="JQ1989">
    <property type="entry name" value="VGBE6S"/>
</dbReference>
<dbReference type="RefSeq" id="NP_042932.1">
    <property type="nucleotide sequence ID" value="NC_001664.2"/>
</dbReference>
<dbReference type="SMR" id="P28864"/>
<dbReference type="GlyCosmos" id="P28864">
    <property type="glycosylation" value="9 sites, No reported glycans"/>
</dbReference>
<dbReference type="DNASU" id="1487917"/>
<dbReference type="GeneID" id="1487917"/>
<dbReference type="KEGG" id="vg:1487917"/>
<dbReference type="Proteomes" id="UP000009295">
    <property type="component" value="Segment"/>
</dbReference>
<dbReference type="GO" id="GO:0044175">
    <property type="term" value="C:host cell endosome membrane"/>
    <property type="evidence" value="ECO:0007669"/>
    <property type="project" value="UniProtKB-SubCell"/>
</dbReference>
<dbReference type="GO" id="GO:0044178">
    <property type="term" value="C:host cell Golgi membrane"/>
    <property type="evidence" value="ECO:0007669"/>
    <property type="project" value="UniProtKB-SubCell"/>
</dbReference>
<dbReference type="GO" id="GO:0020002">
    <property type="term" value="C:host cell plasma membrane"/>
    <property type="evidence" value="ECO:0007669"/>
    <property type="project" value="UniProtKB-SubCell"/>
</dbReference>
<dbReference type="GO" id="GO:0016020">
    <property type="term" value="C:membrane"/>
    <property type="evidence" value="ECO:0007669"/>
    <property type="project" value="UniProtKB-KW"/>
</dbReference>
<dbReference type="GO" id="GO:0019031">
    <property type="term" value="C:viral envelope"/>
    <property type="evidence" value="ECO:0007669"/>
    <property type="project" value="UniProtKB-KW"/>
</dbReference>
<dbReference type="GO" id="GO:0055036">
    <property type="term" value="C:virion membrane"/>
    <property type="evidence" value="ECO:0007669"/>
    <property type="project" value="UniProtKB-SubCell"/>
</dbReference>
<dbReference type="GO" id="GO:0046718">
    <property type="term" value="P:symbiont entry into host cell"/>
    <property type="evidence" value="ECO:0007669"/>
    <property type="project" value="UniProtKB-KW"/>
</dbReference>
<dbReference type="GO" id="GO:0019062">
    <property type="term" value="P:virion attachment to host cell"/>
    <property type="evidence" value="ECO:0007669"/>
    <property type="project" value="UniProtKB-KW"/>
</dbReference>
<dbReference type="Gene3D" id="1.20.5.1890">
    <property type="match status" value="1"/>
</dbReference>
<dbReference type="Gene3D" id="2.30.29.100">
    <property type="match status" value="1"/>
</dbReference>
<dbReference type="Gene3D" id="2.30.30.1230">
    <property type="match status" value="1"/>
</dbReference>
<dbReference type="Gene3D" id="6.10.250.3280">
    <property type="match status" value="1"/>
</dbReference>
<dbReference type="HAMAP" id="MF_04032">
    <property type="entry name" value="HSV_GB"/>
    <property type="match status" value="1"/>
</dbReference>
<dbReference type="InterPro" id="IPR035377">
    <property type="entry name" value="Glycoprot_B_PH1"/>
</dbReference>
<dbReference type="InterPro" id="IPR035381">
    <property type="entry name" value="Glycoprot_B_PH2"/>
</dbReference>
<dbReference type="InterPro" id="IPR038631">
    <property type="entry name" value="Glycoprot_B_PH2_sf"/>
</dbReference>
<dbReference type="InterPro" id="IPR055341">
    <property type="entry name" value="Glycoprotein_B_ecto_C"/>
</dbReference>
<dbReference type="InterPro" id="IPR000234">
    <property type="entry name" value="Herpes_Glycoprot_B"/>
</dbReference>
<dbReference type="Pfam" id="PF17416">
    <property type="entry name" value="Glycoprot_B_PH1"/>
    <property type="match status" value="1"/>
</dbReference>
<dbReference type="Pfam" id="PF17417">
    <property type="entry name" value="Glycoprot_B_PH2"/>
    <property type="match status" value="1"/>
</dbReference>
<dbReference type="Pfam" id="PF00606">
    <property type="entry name" value="Glycoprotein_B"/>
    <property type="match status" value="1"/>
</dbReference>
<dbReference type="SUPFAM" id="SSF161008">
    <property type="entry name" value="Viral glycoprotein ectodomain-like"/>
    <property type="match status" value="1"/>
</dbReference>
<organism>
    <name type="scientific">Human herpesvirus 6A (strain Uganda-1102)</name>
    <name type="common">HHV-6 variant A</name>
    <name type="synonym">Human B lymphotropic virus</name>
    <dbReference type="NCBI Taxonomy" id="10370"/>
    <lineage>
        <taxon>Viruses</taxon>
        <taxon>Duplodnaviria</taxon>
        <taxon>Heunggongvirae</taxon>
        <taxon>Peploviricota</taxon>
        <taxon>Herviviricetes</taxon>
        <taxon>Herpesvirales</taxon>
        <taxon>Orthoherpesviridae</taxon>
        <taxon>Betaherpesvirinae</taxon>
        <taxon>Roseolovirus</taxon>
        <taxon>Roseolovirus humanbeta6a</taxon>
        <taxon>Human betaherpesvirus 6A</taxon>
    </lineage>
</organism>
<organismHost>
    <name type="scientific">Homo sapiens</name>
    <name type="common">Human</name>
    <dbReference type="NCBI Taxonomy" id="9606"/>
</organismHost>
<keyword id="KW-1015">Disulfide bond</keyword>
<keyword id="KW-0325">Glycoprotein</keyword>
<keyword id="KW-1032">Host cell membrane</keyword>
<keyword id="KW-1039">Host endosome</keyword>
<keyword id="KW-1040">Host Golgi apparatus</keyword>
<keyword id="KW-1043">Host membrane</keyword>
<keyword id="KW-0945">Host-virus interaction</keyword>
<keyword id="KW-0472">Membrane</keyword>
<keyword id="KW-1185">Reference proteome</keyword>
<keyword id="KW-0732">Signal</keyword>
<keyword id="KW-0812">Transmembrane</keyword>
<keyword id="KW-1133">Transmembrane helix</keyword>
<keyword id="KW-1161">Viral attachment to host cell</keyword>
<keyword id="KW-0261">Viral envelope protein</keyword>
<keyword id="KW-0946">Virion</keyword>
<keyword id="KW-1160">Virus entry into host cell</keyword>
<accession>P28864</accession>
<accession>Q69067</accession>
<protein>
    <recommendedName>
        <fullName evidence="3">Envelope glycoprotein B</fullName>
        <shortName evidence="3">gB</shortName>
    </recommendedName>
</protein>
<evidence type="ECO:0000250" key="1"/>
<evidence type="ECO:0000255" key="2"/>
<evidence type="ECO:0000255" key="3">
    <source>
        <dbReference type="HAMAP-Rule" id="MF_04032"/>
    </source>
</evidence>